<comment type="function">
    <text evidence="1">The enzymes which catalyze the reversible phosphorolysis of pyrimidine nucleosides are involved in the degradation of these compounds and in their utilization as carbon and energy sources, or in the rescue of pyrimidine bases for nucleotide synthesis.</text>
</comment>
<comment type="catalytic activity">
    <reaction evidence="1">
        <text>thymidine + phosphate = 2-deoxy-alpha-D-ribose 1-phosphate + thymine</text>
        <dbReference type="Rhea" id="RHEA:16037"/>
        <dbReference type="ChEBI" id="CHEBI:17748"/>
        <dbReference type="ChEBI" id="CHEBI:17821"/>
        <dbReference type="ChEBI" id="CHEBI:43474"/>
        <dbReference type="ChEBI" id="CHEBI:57259"/>
        <dbReference type="EC" id="2.4.2.4"/>
    </reaction>
</comment>
<comment type="pathway">
    <text evidence="1">Pyrimidine metabolism; dTMP biosynthesis via salvage pathway; dTMP from thymine: step 1/2.</text>
</comment>
<comment type="subunit">
    <text evidence="1">Homodimer.</text>
</comment>
<comment type="similarity">
    <text evidence="1">Belongs to the thymidine/pyrimidine-nucleoside phosphorylase family.</text>
</comment>
<dbReference type="EC" id="2.4.2.4" evidence="1"/>
<dbReference type="EMBL" id="CP000647">
    <property type="protein sequence ID" value="ABR80181.1"/>
    <property type="molecule type" value="Genomic_DNA"/>
</dbReference>
<dbReference type="RefSeq" id="WP_002887787.1">
    <property type="nucleotide sequence ID" value="NC_009648.1"/>
</dbReference>
<dbReference type="SMR" id="A6THZ7"/>
<dbReference type="STRING" id="272620.KPN_04838"/>
<dbReference type="jPOST" id="A6THZ7"/>
<dbReference type="PaxDb" id="272620-KPN_04838"/>
<dbReference type="EnsemblBacteria" id="ABR80181">
    <property type="protein sequence ID" value="ABR80181"/>
    <property type="gene ID" value="KPN_04838"/>
</dbReference>
<dbReference type="KEGG" id="kpn:KPN_04838"/>
<dbReference type="HOGENOM" id="CLU_025040_0_1_6"/>
<dbReference type="UniPathway" id="UPA00578">
    <property type="reaction ID" value="UER00638"/>
</dbReference>
<dbReference type="Proteomes" id="UP000000265">
    <property type="component" value="Chromosome"/>
</dbReference>
<dbReference type="GO" id="GO:0005829">
    <property type="term" value="C:cytosol"/>
    <property type="evidence" value="ECO:0007669"/>
    <property type="project" value="TreeGrafter"/>
</dbReference>
<dbReference type="GO" id="GO:0004645">
    <property type="term" value="F:1,4-alpha-oligoglucan phosphorylase activity"/>
    <property type="evidence" value="ECO:0007669"/>
    <property type="project" value="InterPro"/>
</dbReference>
<dbReference type="GO" id="GO:0009032">
    <property type="term" value="F:thymidine phosphorylase activity"/>
    <property type="evidence" value="ECO:0007669"/>
    <property type="project" value="UniProtKB-UniRule"/>
</dbReference>
<dbReference type="GO" id="GO:0006206">
    <property type="term" value="P:pyrimidine nucleobase metabolic process"/>
    <property type="evidence" value="ECO:0007669"/>
    <property type="project" value="InterPro"/>
</dbReference>
<dbReference type="GO" id="GO:0046104">
    <property type="term" value="P:thymidine metabolic process"/>
    <property type="evidence" value="ECO:0007669"/>
    <property type="project" value="UniProtKB-UniRule"/>
</dbReference>
<dbReference type="FunFam" id="3.40.1030.10:FF:000001">
    <property type="entry name" value="Thymidine phosphorylase"/>
    <property type="match status" value="1"/>
</dbReference>
<dbReference type="FunFam" id="3.90.1170.30:FF:000001">
    <property type="entry name" value="Thymidine phosphorylase"/>
    <property type="match status" value="1"/>
</dbReference>
<dbReference type="Gene3D" id="3.40.1030.10">
    <property type="entry name" value="Nucleoside phosphorylase/phosphoribosyltransferase catalytic domain"/>
    <property type="match status" value="1"/>
</dbReference>
<dbReference type="Gene3D" id="3.90.1170.30">
    <property type="entry name" value="Pyrimidine nucleoside phosphorylase-like, C-terminal domain"/>
    <property type="match status" value="1"/>
</dbReference>
<dbReference type="Gene3D" id="1.20.970.10">
    <property type="entry name" value="Transferase, Pyrimidine Nucleoside Phosphorylase, Chain C"/>
    <property type="match status" value="1"/>
</dbReference>
<dbReference type="HAMAP" id="MF_01628">
    <property type="entry name" value="Thymid_phosp"/>
    <property type="match status" value="1"/>
</dbReference>
<dbReference type="InterPro" id="IPR000312">
    <property type="entry name" value="Glycosyl_Trfase_fam3"/>
</dbReference>
<dbReference type="InterPro" id="IPR017459">
    <property type="entry name" value="Glycosyl_Trfase_fam3_N_dom"/>
</dbReference>
<dbReference type="InterPro" id="IPR036320">
    <property type="entry name" value="Glycosyl_Trfase_fam3_N_dom_sf"/>
</dbReference>
<dbReference type="InterPro" id="IPR035902">
    <property type="entry name" value="Nuc_phospho_transferase"/>
</dbReference>
<dbReference type="InterPro" id="IPR036566">
    <property type="entry name" value="PYNP-like_C_sf"/>
</dbReference>
<dbReference type="InterPro" id="IPR013102">
    <property type="entry name" value="PYNP_C"/>
</dbReference>
<dbReference type="InterPro" id="IPR018090">
    <property type="entry name" value="Pyrmidine_PPas_bac/euk"/>
</dbReference>
<dbReference type="InterPro" id="IPR017872">
    <property type="entry name" value="Pyrmidine_PPase_CS"/>
</dbReference>
<dbReference type="InterPro" id="IPR000053">
    <property type="entry name" value="Thymidine/pyrmidine_PPase"/>
</dbReference>
<dbReference type="InterPro" id="IPR013465">
    <property type="entry name" value="Thymidine_Pase"/>
</dbReference>
<dbReference type="NCBIfam" id="NF004490">
    <property type="entry name" value="PRK05820.1"/>
    <property type="match status" value="1"/>
</dbReference>
<dbReference type="NCBIfam" id="TIGR02643">
    <property type="entry name" value="T_phosphoryl"/>
    <property type="match status" value="1"/>
</dbReference>
<dbReference type="NCBIfam" id="TIGR02644">
    <property type="entry name" value="Y_phosphoryl"/>
    <property type="match status" value="1"/>
</dbReference>
<dbReference type="PANTHER" id="PTHR10515">
    <property type="entry name" value="THYMIDINE PHOSPHORYLASE"/>
    <property type="match status" value="1"/>
</dbReference>
<dbReference type="PANTHER" id="PTHR10515:SF0">
    <property type="entry name" value="THYMIDINE PHOSPHORYLASE"/>
    <property type="match status" value="1"/>
</dbReference>
<dbReference type="Pfam" id="PF02885">
    <property type="entry name" value="Glycos_trans_3N"/>
    <property type="match status" value="1"/>
</dbReference>
<dbReference type="Pfam" id="PF00591">
    <property type="entry name" value="Glycos_transf_3"/>
    <property type="match status" value="1"/>
</dbReference>
<dbReference type="Pfam" id="PF07831">
    <property type="entry name" value="PYNP_C"/>
    <property type="match status" value="1"/>
</dbReference>
<dbReference type="PIRSF" id="PIRSF000478">
    <property type="entry name" value="TP_PyNP"/>
    <property type="match status" value="1"/>
</dbReference>
<dbReference type="SMART" id="SM00941">
    <property type="entry name" value="PYNP_C"/>
    <property type="match status" value="1"/>
</dbReference>
<dbReference type="SUPFAM" id="SSF52418">
    <property type="entry name" value="Nucleoside phosphorylase/phosphoribosyltransferase catalytic domain"/>
    <property type="match status" value="1"/>
</dbReference>
<dbReference type="SUPFAM" id="SSF47648">
    <property type="entry name" value="Nucleoside phosphorylase/phosphoribosyltransferase N-terminal domain"/>
    <property type="match status" value="1"/>
</dbReference>
<dbReference type="SUPFAM" id="SSF54680">
    <property type="entry name" value="Pyrimidine nucleoside phosphorylase C-terminal domain"/>
    <property type="match status" value="1"/>
</dbReference>
<dbReference type="PROSITE" id="PS00647">
    <property type="entry name" value="THYMID_PHOSPHORYLASE"/>
    <property type="match status" value="1"/>
</dbReference>
<accession>A6THZ7</accession>
<gene>
    <name evidence="1" type="primary">deoA</name>
    <name type="ordered locus">KPN78578_47570</name>
    <name type="ORF">KPN_04838</name>
</gene>
<evidence type="ECO:0000255" key="1">
    <source>
        <dbReference type="HAMAP-Rule" id="MF_01628"/>
    </source>
</evidence>
<reference key="1">
    <citation type="submission" date="2006-09" db="EMBL/GenBank/DDBJ databases">
        <authorList>
            <consortium name="The Klebsiella pneumonia Genome Sequencing Project"/>
            <person name="McClelland M."/>
            <person name="Sanderson E.K."/>
            <person name="Spieth J."/>
            <person name="Clifton W.S."/>
            <person name="Latreille P."/>
            <person name="Sabo A."/>
            <person name="Pepin K."/>
            <person name="Bhonagiri V."/>
            <person name="Porwollik S."/>
            <person name="Ali J."/>
            <person name="Wilson R.K."/>
        </authorList>
    </citation>
    <scope>NUCLEOTIDE SEQUENCE [LARGE SCALE GENOMIC DNA]</scope>
    <source>
        <strain>ATCC 700721 / MGH 78578</strain>
    </source>
</reference>
<feature type="chain" id="PRO_1000069663" description="Thymidine phosphorylase">
    <location>
        <begin position="1"/>
        <end position="440"/>
    </location>
</feature>
<keyword id="KW-0328">Glycosyltransferase</keyword>
<keyword id="KW-0808">Transferase</keyword>
<organism>
    <name type="scientific">Klebsiella pneumoniae subsp. pneumoniae (strain ATCC 700721 / MGH 78578)</name>
    <dbReference type="NCBI Taxonomy" id="272620"/>
    <lineage>
        <taxon>Bacteria</taxon>
        <taxon>Pseudomonadati</taxon>
        <taxon>Pseudomonadota</taxon>
        <taxon>Gammaproteobacteria</taxon>
        <taxon>Enterobacterales</taxon>
        <taxon>Enterobacteriaceae</taxon>
        <taxon>Klebsiella/Raoultella group</taxon>
        <taxon>Klebsiella</taxon>
        <taxon>Klebsiella pneumoniae complex</taxon>
    </lineage>
</organism>
<sequence>MFLAQEIIRKKRDGQALSDEEIRFFINGIRDNTISEGQIAALAMTIFFHDMSMPERVSLTMAMRDSGTVLDWKSLNLNGPIVDKHSTGGVGDVTSLMLGPMVAACGGYVPMISGRGLGHTGGTLDKLEAIPGFDIFPDDNRFREIIKDVGVAIIGQTSSLAPADKRFYATRDITATVDSIPLITASILAKKLAEGLDALVMDVKVGSGAFMPTYELSAALAEAIVGVANGAGVRTTALLTDMNQVLASSAGNAVEVREAVQFLTGEYRNPRLFDVTMALCVEMLISGKLAADDAEARAKLQAVLDNGKAAEVFGRMVAAQKGPSDFVENYANYLPTAMLSKAVYADTEGFISAMDTRALGMAVVSMGGGRRQASDTIDYSVGFTEMARLGDRVDGQRPLAVIHAKDENSWQEAAKAVKAAIKLDDKAPEITPTVYRRITE</sequence>
<name>TYPH_KLEP7</name>
<protein>
    <recommendedName>
        <fullName evidence="1">Thymidine phosphorylase</fullName>
        <ecNumber evidence="1">2.4.2.4</ecNumber>
    </recommendedName>
    <alternativeName>
        <fullName evidence="1">TdRPase</fullName>
    </alternativeName>
</protein>
<proteinExistence type="inferred from homology"/>